<sequence>MSLAVRVIPCLDVDNGRVVKGVNFQNLRDAGDPVEMAKLYDAEGADELTFLDITASSGDRETTYDVVRRTAEQVFIPLTVGGGVRTPDDVDKLLRAGADKVGVNTAAIARPDLIREIAERFGRQVLVLSVDARRTPEGTFEVTTHGGRKGTGIDAVEWAHRAAELGAGEILLNSMDADGTKDGYDTEMIEAVRKHVTVPVIASGGAGRLADFAPAIEAGADAVLAASVFHFGDLRILEVKGALREAGHPVR</sequence>
<proteinExistence type="inferred from homology"/>
<name>HIS6_STRGG</name>
<comment type="function">
    <text evidence="1">IGPS catalyzes the conversion of PRFAR and glutamine to IGP, AICAR and glutamate. The HisF subunit catalyzes the cyclization activity that produces IGP and AICAR from PRFAR using the ammonia provided by the HisH subunit.</text>
</comment>
<comment type="catalytic activity">
    <reaction evidence="1">
        <text>5-[(5-phospho-1-deoxy-D-ribulos-1-ylimino)methylamino]-1-(5-phospho-beta-D-ribosyl)imidazole-4-carboxamide + L-glutamine = D-erythro-1-(imidazol-4-yl)glycerol 3-phosphate + 5-amino-1-(5-phospho-beta-D-ribosyl)imidazole-4-carboxamide + L-glutamate + H(+)</text>
        <dbReference type="Rhea" id="RHEA:24793"/>
        <dbReference type="ChEBI" id="CHEBI:15378"/>
        <dbReference type="ChEBI" id="CHEBI:29985"/>
        <dbReference type="ChEBI" id="CHEBI:58278"/>
        <dbReference type="ChEBI" id="CHEBI:58359"/>
        <dbReference type="ChEBI" id="CHEBI:58475"/>
        <dbReference type="ChEBI" id="CHEBI:58525"/>
        <dbReference type="EC" id="4.3.2.10"/>
    </reaction>
</comment>
<comment type="pathway">
    <text evidence="1">Amino-acid biosynthesis; L-histidine biosynthesis; L-histidine from 5-phospho-alpha-D-ribose 1-diphosphate: step 5/9.</text>
</comment>
<comment type="subunit">
    <text evidence="1">Heterodimer of HisH and HisF.</text>
</comment>
<comment type="subcellular location">
    <subcellularLocation>
        <location evidence="1">Cytoplasm</location>
    </subcellularLocation>
</comment>
<comment type="similarity">
    <text evidence="1">Belongs to the HisA/HisF family.</text>
</comment>
<keyword id="KW-0028">Amino-acid biosynthesis</keyword>
<keyword id="KW-0963">Cytoplasm</keyword>
<keyword id="KW-0368">Histidine biosynthesis</keyword>
<keyword id="KW-0456">Lyase</keyword>
<feature type="chain" id="PRO_1000135049" description="Imidazole glycerol phosphate synthase subunit HisF">
    <location>
        <begin position="1"/>
        <end position="251"/>
    </location>
</feature>
<feature type="active site" evidence="1">
    <location>
        <position position="12"/>
    </location>
</feature>
<feature type="active site" evidence="1">
    <location>
        <position position="131"/>
    </location>
</feature>
<accession>B1W0M6</accession>
<protein>
    <recommendedName>
        <fullName evidence="1">Imidazole glycerol phosphate synthase subunit HisF</fullName>
        <ecNumber evidence="1">4.3.2.10</ecNumber>
    </recommendedName>
    <alternativeName>
        <fullName evidence="1">IGP synthase cyclase subunit</fullName>
    </alternativeName>
    <alternativeName>
        <fullName evidence="1">IGP synthase subunit HisF</fullName>
    </alternativeName>
    <alternativeName>
        <fullName evidence="1">ImGP synthase subunit HisF</fullName>
        <shortName evidence="1">IGPS subunit HisF</shortName>
    </alternativeName>
</protein>
<dbReference type="EC" id="4.3.2.10" evidence="1"/>
<dbReference type="EMBL" id="AP009493">
    <property type="protein sequence ID" value="BAG22286.1"/>
    <property type="molecule type" value="Genomic_DNA"/>
</dbReference>
<dbReference type="RefSeq" id="WP_012381324.1">
    <property type="nucleotide sequence ID" value="NC_010572.1"/>
</dbReference>
<dbReference type="SMR" id="B1W0M6"/>
<dbReference type="KEGG" id="sgr:SGR_5457"/>
<dbReference type="PATRIC" id="fig|455632.4.peg.5588"/>
<dbReference type="eggNOG" id="COG0107">
    <property type="taxonomic scope" value="Bacteria"/>
</dbReference>
<dbReference type="HOGENOM" id="CLU_048577_4_0_11"/>
<dbReference type="UniPathway" id="UPA00031">
    <property type="reaction ID" value="UER00010"/>
</dbReference>
<dbReference type="Proteomes" id="UP000001685">
    <property type="component" value="Chromosome"/>
</dbReference>
<dbReference type="GO" id="GO:0005737">
    <property type="term" value="C:cytoplasm"/>
    <property type="evidence" value="ECO:0007669"/>
    <property type="project" value="UniProtKB-SubCell"/>
</dbReference>
<dbReference type="GO" id="GO:0000107">
    <property type="term" value="F:imidazoleglycerol-phosphate synthase activity"/>
    <property type="evidence" value="ECO:0007669"/>
    <property type="project" value="UniProtKB-UniRule"/>
</dbReference>
<dbReference type="GO" id="GO:0016829">
    <property type="term" value="F:lyase activity"/>
    <property type="evidence" value="ECO:0007669"/>
    <property type="project" value="UniProtKB-KW"/>
</dbReference>
<dbReference type="GO" id="GO:0000105">
    <property type="term" value="P:L-histidine biosynthetic process"/>
    <property type="evidence" value="ECO:0007669"/>
    <property type="project" value="UniProtKB-UniRule"/>
</dbReference>
<dbReference type="CDD" id="cd04731">
    <property type="entry name" value="HisF"/>
    <property type="match status" value="1"/>
</dbReference>
<dbReference type="FunFam" id="3.20.20.70:FF:000006">
    <property type="entry name" value="Imidazole glycerol phosphate synthase subunit HisF"/>
    <property type="match status" value="1"/>
</dbReference>
<dbReference type="Gene3D" id="3.20.20.70">
    <property type="entry name" value="Aldolase class I"/>
    <property type="match status" value="1"/>
</dbReference>
<dbReference type="HAMAP" id="MF_01013">
    <property type="entry name" value="HisF"/>
    <property type="match status" value="1"/>
</dbReference>
<dbReference type="InterPro" id="IPR013785">
    <property type="entry name" value="Aldolase_TIM"/>
</dbReference>
<dbReference type="InterPro" id="IPR006062">
    <property type="entry name" value="His_biosynth"/>
</dbReference>
<dbReference type="InterPro" id="IPR004651">
    <property type="entry name" value="HisF"/>
</dbReference>
<dbReference type="InterPro" id="IPR050064">
    <property type="entry name" value="IGPS_HisA/HisF"/>
</dbReference>
<dbReference type="InterPro" id="IPR011060">
    <property type="entry name" value="RibuloseP-bd_barrel"/>
</dbReference>
<dbReference type="NCBIfam" id="TIGR00735">
    <property type="entry name" value="hisF"/>
    <property type="match status" value="1"/>
</dbReference>
<dbReference type="PANTHER" id="PTHR21235:SF2">
    <property type="entry name" value="IMIDAZOLE GLYCEROL PHOSPHATE SYNTHASE HISHF"/>
    <property type="match status" value="1"/>
</dbReference>
<dbReference type="PANTHER" id="PTHR21235">
    <property type="entry name" value="IMIDAZOLE GLYCEROL PHOSPHATE SYNTHASE SUBUNIT HISF/H IGP SYNTHASE SUBUNIT HISF/H"/>
    <property type="match status" value="1"/>
</dbReference>
<dbReference type="Pfam" id="PF00977">
    <property type="entry name" value="His_biosynth"/>
    <property type="match status" value="1"/>
</dbReference>
<dbReference type="SUPFAM" id="SSF51366">
    <property type="entry name" value="Ribulose-phoshate binding barrel"/>
    <property type="match status" value="1"/>
</dbReference>
<organism>
    <name type="scientific">Streptomyces griseus subsp. griseus (strain JCM 4626 / CBS 651.72 / NBRC 13350 / KCC S-0626 / ISP 5235)</name>
    <dbReference type="NCBI Taxonomy" id="455632"/>
    <lineage>
        <taxon>Bacteria</taxon>
        <taxon>Bacillati</taxon>
        <taxon>Actinomycetota</taxon>
        <taxon>Actinomycetes</taxon>
        <taxon>Kitasatosporales</taxon>
        <taxon>Streptomycetaceae</taxon>
        <taxon>Streptomyces</taxon>
    </lineage>
</organism>
<reference key="1">
    <citation type="journal article" date="2008" name="J. Bacteriol.">
        <title>Genome sequence of the streptomycin-producing microorganism Streptomyces griseus IFO 13350.</title>
        <authorList>
            <person name="Ohnishi Y."/>
            <person name="Ishikawa J."/>
            <person name="Hara H."/>
            <person name="Suzuki H."/>
            <person name="Ikenoya M."/>
            <person name="Ikeda H."/>
            <person name="Yamashita A."/>
            <person name="Hattori M."/>
            <person name="Horinouchi S."/>
        </authorList>
    </citation>
    <scope>NUCLEOTIDE SEQUENCE [LARGE SCALE GENOMIC DNA]</scope>
    <source>
        <strain>JCM 4626 / CBS 651.72 / NBRC 13350 / KCC S-0626 / ISP 5235</strain>
    </source>
</reference>
<evidence type="ECO:0000255" key="1">
    <source>
        <dbReference type="HAMAP-Rule" id="MF_01013"/>
    </source>
</evidence>
<gene>
    <name evidence="1" type="primary">hisF</name>
    <name type="ordered locus">SGR_5457</name>
</gene>